<accession>P19223</accession>
<dbReference type="EC" id="3.4.17.2" evidence="2"/>
<dbReference type="EMBL" id="M23959">
    <property type="protein sequence ID" value="AAA40872.1"/>
    <property type="molecule type" value="Genomic_DNA"/>
</dbReference>
<dbReference type="EMBL" id="M23947">
    <property type="protein sequence ID" value="AAA40872.1"/>
    <property type="status" value="JOINED"/>
    <property type="molecule type" value="Genomic_DNA"/>
</dbReference>
<dbReference type="EMBL" id="M23950">
    <property type="protein sequence ID" value="AAA40872.1"/>
    <property type="status" value="JOINED"/>
    <property type="molecule type" value="Genomic_DNA"/>
</dbReference>
<dbReference type="EMBL" id="M23952">
    <property type="protein sequence ID" value="AAA40872.1"/>
    <property type="status" value="JOINED"/>
    <property type="molecule type" value="Genomic_DNA"/>
</dbReference>
<dbReference type="EMBL" id="M23953">
    <property type="protein sequence ID" value="AAA40872.1"/>
    <property type="status" value="JOINED"/>
    <property type="molecule type" value="Genomic_DNA"/>
</dbReference>
<dbReference type="EMBL" id="M23954">
    <property type="protein sequence ID" value="AAA40872.1"/>
    <property type="status" value="JOINED"/>
    <property type="molecule type" value="Genomic_DNA"/>
</dbReference>
<dbReference type="PIR" id="A32129">
    <property type="entry name" value="A32129"/>
</dbReference>
<dbReference type="SMR" id="P19223"/>
<dbReference type="FunCoup" id="P19223">
    <property type="interactions" value="18"/>
</dbReference>
<dbReference type="STRING" id="10116.ENSRNOP00000048109"/>
<dbReference type="MEROPS" id="M14.003"/>
<dbReference type="PhosphoSitePlus" id="P19223"/>
<dbReference type="PaxDb" id="10116-ENSRNOP00000048109"/>
<dbReference type="UCSC" id="RGD:2391">
    <property type="organism name" value="rat"/>
</dbReference>
<dbReference type="AGR" id="RGD:2391"/>
<dbReference type="RGD" id="2391">
    <property type="gene designation" value="Cpb1"/>
</dbReference>
<dbReference type="eggNOG" id="KOG2650">
    <property type="taxonomic scope" value="Eukaryota"/>
</dbReference>
<dbReference type="InParanoid" id="P19223"/>
<dbReference type="PhylomeDB" id="P19223"/>
<dbReference type="Reactome" id="R-RNO-2022377">
    <property type="pathway name" value="Metabolism of Angiotensinogen to Angiotensins"/>
</dbReference>
<dbReference type="PRO" id="PR:P19223"/>
<dbReference type="Proteomes" id="UP000002494">
    <property type="component" value="Unplaced"/>
</dbReference>
<dbReference type="GO" id="GO:0031410">
    <property type="term" value="C:cytoplasmic vesicle"/>
    <property type="evidence" value="ECO:0007669"/>
    <property type="project" value="UniProtKB-KW"/>
</dbReference>
<dbReference type="GO" id="GO:0005615">
    <property type="term" value="C:extracellular space"/>
    <property type="evidence" value="ECO:0000318"/>
    <property type="project" value="GO_Central"/>
</dbReference>
<dbReference type="GO" id="GO:0004180">
    <property type="term" value="F:carboxypeptidase activity"/>
    <property type="evidence" value="ECO:0000314"/>
    <property type="project" value="RGD"/>
</dbReference>
<dbReference type="GO" id="GO:0004181">
    <property type="term" value="F:metallocarboxypeptidase activity"/>
    <property type="evidence" value="ECO:0000318"/>
    <property type="project" value="GO_Central"/>
</dbReference>
<dbReference type="GO" id="GO:0008270">
    <property type="term" value="F:zinc ion binding"/>
    <property type="evidence" value="ECO:0007669"/>
    <property type="project" value="InterPro"/>
</dbReference>
<dbReference type="GO" id="GO:0006508">
    <property type="term" value="P:proteolysis"/>
    <property type="evidence" value="ECO:0000266"/>
    <property type="project" value="RGD"/>
</dbReference>
<dbReference type="CDD" id="cd03871">
    <property type="entry name" value="M14_CPB"/>
    <property type="match status" value="1"/>
</dbReference>
<dbReference type="FunFam" id="3.30.70.340:FF:000002">
    <property type="entry name" value="Carboxypeptidase A"/>
    <property type="match status" value="1"/>
</dbReference>
<dbReference type="FunFam" id="3.40.630.10:FF:000001">
    <property type="entry name" value="Carboxypeptidase B"/>
    <property type="match status" value="1"/>
</dbReference>
<dbReference type="Gene3D" id="3.30.70.340">
    <property type="entry name" value="Metallocarboxypeptidase-like"/>
    <property type="match status" value="1"/>
</dbReference>
<dbReference type="Gene3D" id="3.40.630.10">
    <property type="entry name" value="Zn peptidases"/>
    <property type="match status" value="1"/>
</dbReference>
<dbReference type="InterPro" id="IPR034253">
    <property type="entry name" value="CPB_M14_CPD"/>
</dbReference>
<dbReference type="InterPro" id="IPR036990">
    <property type="entry name" value="M14A-like_propep"/>
</dbReference>
<dbReference type="InterPro" id="IPR003146">
    <property type="entry name" value="M14A_act_pep"/>
</dbReference>
<dbReference type="InterPro" id="IPR000834">
    <property type="entry name" value="Peptidase_M14"/>
</dbReference>
<dbReference type="PANTHER" id="PTHR11705:SF20">
    <property type="entry name" value="CARBOXYPEPTIDASE B"/>
    <property type="match status" value="1"/>
</dbReference>
<dbReference type="PANTHER" id="PTHR11705">
    <property type="entry name" value="PROTEASE FAMILY M14 CARBOXYPEPTIDASE A,B"/>
    <property type="match status" value="1"/>
</dbReference>
<dbReference type="Pfam" id="PF00246">
    <property type="entry name" value="Peptidase_M14"/>
    <property type="match status" value="1"/>
</dbReference>
<dbReference type="Pfam" id="PF02244">
    <property type="entry name" value="Propep_M14"/>
    <property type="match status" value="1"/>
</dbReference>
<dbReference type="PRINTS" id="PR00765">
    <property type="entry name" value="CRBOXYPTASEA"/>
</dbReference>
<dbReference type="SMART" id="SM00631">
    <property type="entry name" value="Zn_pept"/>
    <property type="match status" value="1"/>
</dbReference>
<dbReference type="SUPFAM" id="SSF54897">
    <property type="entry name" value="Protease propeptides/inhibitors"/>
    <property type="match status" value="1"/>
</dbReference>
<dbReference type="SUPFAM" id="SSF53187">
    <property type="entry name" value="Zn-dependent exopeptidases"/>
    <property type="match status" value="1"/>
</dbReference>
<dbReference type="PROSITE" id="PS00132">
    <property type="entry name" value="CARBOXYPEPT_ZN_1"/>
    <property type="match status" value="1"/>
</dbReference>
<dbReference type="PROSITE" id="PS00133">
    <property type="entry name" value="CARBOXYPEPT_ZN_2"/>
    <property type="match status" value="1"/>
</dbReference>
<dbReference type="PROSITE" id="PS52035">
    <property type="entry name" value="PEPTIDASE_M14"/>
    <property type="match status" value="1"/>
</dbReference>
<sequence>MLLLLALVSVALAHASEEHFDGNRVYRVSVHGEDHVNLIQELANTKEIDFWKPDSATQVKPLTTVDFHVKAEDVADVENFLEENEVHYEVLISNVRNALESQFDSHTRASGHSYTKYNKWETIEAWIQQVATDNPDLVTQSVIGTTFEGRNMYVLKIGKTRPNKPAIFIDCGFHAREWISPAFCQWFVREAVRTYNQEIHMKQLLDELDFYVLPVVNIDGYVYTWTKDRMWRKTRSTMAGSSCLGVRPNRNFNAGWCEVGASRSPCSETYCGPAPESEKETKALADFIRNNLSTIKAYLTIHSYSQMMLYPYSYDYKLPENYEELNALVKGAAKELATLHGTKYTYGPGATTIYPAAGGSDDWSYDQGIKYSFTFELRDTGFFGFLLPESQIRQTCEETMLAVKYIANYVREHLY</sequence>
<feature type="signal peptide" evidence="3">
    <location>
        <begin position="1"/>
        <end position="13"/>
    </location>
</feature>
<feature type="propeptide" id="PRO_0000004375" description="Activation peptide" evidence="6">
    <location>
        <begin position="14"/>
        <end position="108"/>
    </location>
</feature>
<feature type="chain" id="PRO_0000004376" description="Carboxypeptidase B">
    <location>
        <begin position="109"/>
        <end position="415"/>
    </location>
</feature>
<feature type="domain" description="Peptidase M14" evidence="5">
    <location>
        <begin position="116"/>
        <end position="410"/>
    </location>
</feature>
<feature type="active site" description="Proton donor/acceptor" evidence="5">
    <location>
        <position position="376"/>
    </location>
</feature>
<feature type="binding site" evidence="1">
    <location>
        <begin position="174"/>
        <end position="177"/>
    </location>
    <ligand>
        <name>substrate</name>
    </ligand>
</feature>
<feature type="binding site" evidence="5">
    <location>
        <position position="174"/>
    </location>
    <ligand>
        <name>Zn(2+)</name>
        <dbReference type="ChEBI" id="CHEBI:29105"/>
        <note>catalytic</note>
    </ligand>
</feature>
<feature type="binding site" evidence="5">
    <location>
        <position position="177"/>
    </location>
    <ligand>
        <name>Zn(2+)</name>
        <dbReference type="ChEBI" id="CHEBI:29105"/>
        <note>catalytic</note>
    </ligand>
</feature>
<feature type="binding site" evidence="1">
    <location>
        <position position="232"/>
    </location>
    <ligand>
        <name>substrate</name>
    </ligand>
</feature>
<feature type="binding site" evidence="1">
    <location>
        <begin position="249"/>
        <end position="250"/>
    </location>
    <ligand>
        <name>substrate</name>
    </ligand>
</feature>
<feature type="binding site" evidence="5">
    <location>
        <position position="302"/>
    </location>
    <ligand>
        <name>Zn(2+)</name>
        <dbReference type="ChEBI" id="CHEBI:29105"/>
        <note>catalytic</note>
    </ligand>
</feature>
<feature type="binding site" evidence="1">
    <location>
        <begin position="303"/>
        <end position="304"/>
    </location>
    <ligand>
        <name>substrate</name>
    </ligand>
</feature>
<feature type="binding site" evidence="1">
    <location>
        <position position="354"/>
    </location>
    <ligand>
        <name>substrate</name>
    </ligand>
</feature>
<feature type="disulfide bond" evidence="2">
    <location>
        <begin position="171"/>
        <end position="184"/>
    </location>
</feature>
<feature type="disulfide bond" evidence="2">
    <location>
        <begin position="243"/>
        <end position="266"/>
    </location>
</feature>
<feature type="disulfide bond" evidence="2">
    <location>
        <begin position="257"/>
        <end position="271"/>
    </location>
</feature>
<comment type="catalytic activity">
    <reaction evidence="2">
        <text>Preferential release of a C-terminal lysine or arginine amino acid.</text>
        <dbReference type="EC" id="3.4.17.2"/>
    </reaction>
</comment>
<comment type="cofactor">
    <cofactor evidence="3">
        <name>Zn(2+)</name>
        <dbReference type="ChEBI" id="CHEBI:29105"/>
    </cofactor>
    <text evidence="3">Binds 1 zinc ion per subunit.</text>
</comment>
<comment type="subcellular location">
    <subcellularLocation>
        <location evidence="2">Secreted</location>
    </subcellularLocation>
    <subcellularLocation>
        <location evidence="4">Zymogen granule lumen</location>
    </subcellularLocation>
</comment>
<comment type="similarity">
    <text evidence="7">Belongs to the peptidase M14 family.</text>
</comment>
<keyword id="KW-0121">Carboxypeptidase</keyword>
<keyword id="KW-0968">Cytoplasmic vesicle</keyword>
<keyword id="KW-0903">Direct protein sequencing</keyword>
<keyword id="KW-1015">Disulfide bond</keyword>
<keyword id="KW-0378">Hydrolase</keyword>
<keyword id="KW-0479">Metal-binding</keyword>
<keyword id="KW-0482">Metalloprotease</keyword>
<keyword id="KW-0645">Protease</keyword>
<keyword id="KW-1185">Reference proteome</keyword>
<keyword id="KW-0964">Secreted</keyword>
<keyword id="KW-0732">Signal</keyword>
<keyword id="KW-0862">Zinc</keyword>
<keyword id="KW-0865">Zymogen</keyword>
<name>CBPB1_RAT</name>
<reference key="1">
    <citation type="journal article" date="1988" name="J. Biol. Chem.">
        <title>Structural characterization of the rat carboxypeptidase A1 and B genes. Comparative analysis of the rat carboxypeptidase gene family.</title>
        <authorList>
            <person name="Clauser E."/>
            <person name="Gardell S.J."/>
            <person name="Craik C.S."/>
            <person name="Macdonald R.J."/>
            <person name="Rutter W.J."/>
        </authorList>
    </citation>
    <scope>NUCLEOTIDE SEQUENCE [GENOMIC DNA]</scope>
</reference>
<reference key="2">
    <citation type="journal article" date="1991" name="Biochem. J.">
        <title>Distribution of manganese in rat pancreas and identification of its primary binding protein as pro-carboxypeptidase B.</title>
        <authorList>
            <person name="Kodama H."/>
            <person name="Shimojo N."/>
            <person name="Suzuki K.T."/>
        </authorList>
    </citation>
    <scope>PROTEIN SEQUENCE OF 109-130</scope>
    <source>
        <strain>Wistar</strain>
        <tissue>Pancreas</tissue>
    </source>
</reference>
<protein>
    <recommendedName>
        <fullName>Carboxypeptidase B</fullName>
        <ecNumber evidence="2">3.4.17.2</ecNumber>
    </recommendedName>
</protein>
<organism>
    <name type="scientific">Rattus norvegicus</name>
    <name type="common">Rat</name>
    <dbReference type="NCBI Taxonomy" id="10116"/>
    <lineage>
        <taxon>Eukaryota</taxon>
        <taxon>Metazoa</taxon>
        <taxon>Chordata</taxon>
        <taxon>Craniata</taxon>
        <taxon>Vertebrata</taxon>
        <taxon>Euteleostomi</taxon>
        <taxon>Mammalia</taxon>
        <taxon>Eutheria</taxon>
        <taxon>Euarchontoglires</taxon>
        <taxon>Glires</taxon>
        <taxon>Rodentia</taxon>
        <taxon>Myomorpha</taxon>
        <taxon>Muroidea</taxon>
        <taxon>Muridae</taxon>
        <taxon>Murinae</taxon>
        <taxon>Rattus</taxon>
    </lineage>
</organism>
<evidence type="ECO:0000250" key="1">
    <source>
        <dbReference type="UniProtKB" id="P00730"/>
    </source>
</evidence>
<evidence type="ECO:0000250" key="2">
    <source>
        <dbReference type="UniProtKB" id="P00732"/>
    </source>
</evidence>
<evidence type="ECO:0000250" key="3">
    <source>
        <dbReference type="UniProtKB" id="P15086"/>
    </source>
</evidence>
<evidence type="ECO:0000250" key="4">
    <source>
        <dbReference type="UniProtKB" id="P55261"/>
    </source>
</evidence>
<evidence type="ECO:0000255" key="5">
    <source>
        <dbReference type="PROSITE-ProRule" id="PRU01379"/>
    </source>
</evidence>
<evidence type="ECO:0000269" key="6">
    <source>
    </source>
</evidence>
<evidence type="ECO:0000305" key="7"/>
<gene>
    <name type="primary">Cpb1</name>
    <name type="synonym">Cpb</name>
</gene>
<proteinExistence type="evidence at protein level"/>